<reference key="1">
    <citation type="journal article" date="2005" name="Genome Res.">
        <title>Comparative and functional genomic analyses of the pathogenicity of phytopathogen Xanthomonas campestris pv. campestris.</title>
        <authorList>
            <person name="Qian W."/>
            <person name="Jia Y."/>
            <person name="Ren S.-X."/>
            <person name="He Y.-Q."/>
            <person name="Feng J.-X."/>
            <person name="Lu L.-F."/>
            <person name="Sun Q."/>
            <person name="Ying G."/>
            <person name="Tang D.-J."/>
            <person name="Tang H."/>
            <person name="Wu W."/>
            <person name="Hao P."/>
            <person name="Wang L."/>
            <person name="Jiang B.-L."/>
            <person name="Zeng S."/>
            <person name="Gu W.-Y."/>
            <person name="Lu G."/>
            <person name="Rong L."/>
            <person name="Tian Y."/>
            <person name="Yao Z."/>
            <person name="Fu G."/>
            <person name="Chen B."/>
            <person name="Fang R."/>
            <person name="Qiang B."/>
            <person name="Chen Z."/>
            <person name="Zhao G.-P."/>
            <person name="Tang J.-L."/>
            <person name="He C."/>
        </authorList>
    </citation>
    <scope>NUCLEOTIDE SEQUENCE [LARGE SCALE GENOMIC DNA]</scope>
    <source>
        <strain>8004</strain>
    </source>
</reference>
<organism>
    <name type="scientific">Xanthomonas campestris pv. campestris (strain 8004)</name>
    <dbReference type="NCBI Taxonomy" id="314565"/>
    <lineage>
        <taxon>Bacteria</taxon>
        <taxon>Pseudomonadati</taxon>
        <taxon>Pseudomonadota</taxon>
        <taxon>Gammaproteobacteria</taxon>
        <taxon>Lysobacterales</taxon>
        <taxon>Lysobacteraceae</taxon>
        <taxon>Xanthomonas</taxon>
    </lineage>
</organism>
<sequence length="89" mass="9690">MANIKSAKKRAKQTVVRNERNTGQRSMLRTAVKKVIKALDANDAAGAEAAFAVAQPILDRFSARGLIHKNKAARHKSRLTARIKAIKAA</sequence>
<protein>
    <recommendedName>
        <fullName evidence="1">Small ribosomal subunit protein bS20</fullName>
    </recommendedName>
    <alternativeName>
        <fullName evidence="3">30S ribosomal protein S20</fullName>
    </alternativeName>
</protein>
<dbReference type="EMBL" id="CP000050">
    <property type="protein sequence ID" value="AAY50136.1"/>
    <property type="molecule type" value="Genomic_DNA"/>
</dbReference>
<dbReference type="RefSeq" id="WP_002807888.1">
    <property type="nucleotide sequence ID" value="NZ_CP155948.1"/>
</dbReference>
<dbReference type="SMR" id="Q4US37"/>
<dbReference type="GeneID" id="95583594"/>
<dbReference type="KEGG" id="xcb:XC_3090"/>
<dbReference type="HOGENOM" id="CLU_160655_4_0_6"/>
<dbReference type="Proteomes" id="UP000000420">
    <property type="component" value="Chromosome"/>
</dbReference>
<dbReference type="GO" id="GO:0005829">
    <property type="term" value="C:cytosol"/>
    <property type="evidence" value="ECO:0007669"/>
    <property type="project" value="TreeGrafter"/>
</dbReference>
<dbReference type="GO" id="GO:0015935">
    <property type="term" value="C:small ribosomal subunit"/>
    <property type="evidence" value="ECO:0007669"/>
    <property type="project" value="TreeGrafter"/>
</dbReference>
<dbReference type="GO" id="GO:0070181">
    <property type="term" value="F:small ribosomal subunit rRNA binding"/>
    <property type="evidence" value="ECO:0007669"/>
    <property type="project" value="TreeGrafter"/>
</dbReference>
<dbReference type="GO" id="GO:0003735">
    <property type="term" value="F:structural constituent of ribosome"/>
    <property type="evidence" value="ECO:0007669"/>
    <property type="project" value="InterPro"/>
</dbReference>
<dbReference type="GO" id="GO:0006412">
    <property type="term" value="P:translation"/>
    <property type="evidence" value="ECO:0007669"/>
    <property type="project" value="UniProtKB-UniRule"/>
</dbReference>
<dbReference type="FunFam" id="1.20.58.110:FF:000001">
    <property type="entry name" value="30S ribosomal protein S20"/>
    <property type="match status" value="1"/>
</dbReference>
<dbReference type="Gene3D" id="1.20.58.110">
    <property type="entry name" value="Ribosomal protein S20"/>
    <property type="match status" value="1"/>
</dbReference>
<dbReference type="HAMAP" id="MF_00500">
    <property type="entry name" value="Ribosomal_bS20"/>
    <property type="match status" value="1"/>
</dbReference>
<dbReference type="InterPro" id="IPR002583">
    <property type="entry name" value="Ribosomal_bS20"/>
</dbReference>
<dbReference type="InterPro" id="IPR036510">
    <property type="entry name" value="Ribosomal_bS20_sf"/>
</dbReference>
<dbReference type="NCBIfam" id="TIGR00029">
    <property type="entry name" value="S20"/>
    <property type="match status" value="1"/>
</dbReference>
<dbReference type="PANTHER" id="PTHR33398">
    <property type="entry name" value="30S RIBOSOMAL PROTEIN S20"/>
    <property type="match status" value="1"/>
</dbReference>
<dbReference type="PANTHER" id="PTHR33398:SF1">
    <property type="entry name" value="SMALL RIBOSOMAL SUBUNIT PROTEIN BS20C"/>
    <property type="match status" value="1"/>
</dbReference>
<dbReference type="Pfam" id="PF01649">
    <property type="entry name" value="Ribosomal_S20p"/>
    <property type="match status" value="1"/>
</dbReference>
<dbReference type="SUPFAM" id="SSF46992">
    <property type="entry name" value="Ribosomal protein S20"/>
    <property type="match status" value="1"/>
</dbReference>
<feature type="chain" id="PRO_0000224993" description="Small ribosomal subunit protein bS20">
    <location>
        <begin position="1"/>
        <end position="89"/>
    </location>
</feature>
<feature type="region of interest" description="Disordered" evidence="2">
    <location>
        <begin position="1"/>
        <end position="24"/>
    </location>
</feature>
<feature type="compositionally biased region" description="Basic residues" evidence="2">
    <location>
        <begin position="1"/>
        <end position="12"/>
    </location>
</feature>
<gene>
    <name evidence="1" type="primary">rpsT</name>
    <name type="ordered locus">XC_3090</name>
</gene>
<keyword id="KW-0687">Ribonucleoprotein</keyword>
<keyword id="KW-0689">Ribosomal protein</keyword>
<keyword id="KW-0694">RNA-binding</keyword>
<keyword id="KW-0699">rRNA-binding</keyword>
<accession>Q4US37</accession>
<evidence type="ECO:0000255" key="1">
    <source>
        <dbReference type="HAMAP-Rule" id="MF_00500"/>
    </source>
</evidence>
<evidence type="ECO:0000256" key="2">
    <source>
        <dbReference type="SAM" id="MobiDB-lite"/>
    </source>
</evidence>
<evidence type="ECO:0000305" key="3"/>
<comment type="function">
    <text evidence="1">Binds directly to 16S ribosomal RNA.</text>
</comment>
<comment type="similarity">
    <text evidence="1">Belongs to the bacterial ribosomal protein bS20 family.</text>
</comment>
<name>RS20_XANC8</name>
<proteinExistence type="inferred from homology"/>